<name>ATC4_YEAST</name>
<gene>
    <name type="primary">DNF2</name>
    <name type="ordered locus">YDR093W</name>
    <name type="ORF">YD8557.01</name>
</gene>
<dbReference type="EC" id="7.6.2.1" evidence="18 19 20 21"/>
<dbReference type="EMBL" id="Z47746">
    <property type="protein sequence ID" value="CAA87668.1"/>
    <property type="molecule type" value="Genomic_DNA"/>
</dbReference>
<dbReference type="EMBL" id="BK006938">
    <property type="protein sequence ID" value="DAA11940.1"/>
    <property type="molecule type" value="Genomic_DNA"/>
</dbReference>
<dbReference type="PIR" id="S51243">
    <property type="entry name" value="S51243"/>
</dbReference>
<dbReference type="RefSeq" id="NP_010378.1">
    <property type="nucleotide sequence ID" value="NM_001180401.1"/>
</dbReference>
<dbReference type="PDB" id="7KY5">
    <property type="method" value="EM"/>
    <property type="resolution" value="3.98 A"/>
    <property type="chains" value="A=1-1612"/>
</dbReference>
<dbReference type="PDB" id="7KY7">
    <property type="method" value="EM"/>
    <property type="resolution" value="3.08 A"/>
    <property type="chains" value="A=1-1612"/>
</dbReference>
<dbReference type="PDB" id="7KY8">
    <property type="method" value="EM"/>
    <property type="resolution" value="3.85 A"/>
    <property type="chains" value="A=1-1612"/>
</dbReference>
<dbReference type="PDB" id="7KY9">
    <property type="method" value="EM"/>
    <property type="resolution" value="4.05 A"/>
    <property type="chains" value="A=1-1612"/>
</dbReference>
<dbReference type="PDB" id="7KYA">
    <property type="method" value="EM"/>
    <property type="resolution" value="3.50 A"/>
    <property type="chains" value="A=1-1612"/>
</dbReference>
<dbReference type="PDBsum" id="7KY5"/>
<dbReference type="PDBsum" id="7KY7"/>
<dbReference type="PDBsum" id="7KY8"/>
<dbReference type="PDBsum" id="7KY9"/>
<dbReference type="PDBsum" id="7KYA"/>
<dbReference type="EMDB" id="EMD-23068"/>
<dbReference type="EMDB" id="EMD-23070"/>
<dbReference type="EMDB" id="EMD-23071"/>
<dbReference type="EMDB" id="EMD-23072"/>
<dbReference type="EMDB" id="EMD-23073"/>
<dbReference type="SMR" id="Q12675"/>
<dbReference type="BioGRID" id="32150">
    <property type="interactions" value="129"/>
</dbReference>
<dbReference type="ComplexPortal" id="CPX-1022">
    <property type="entry name" value="DNF2-LEM3 P4-ATPase complex"/>
</dbReference>
<dbReference type="DIP" id="DIP-8055N"/>
<dbReference type="FunCoup" id="Q12675">
    <property type="interactions" value="34"/>
</dbReference>
<dbReference type="IntAct" id="Q12675">
    <property type="interactions" value="12"/>
</dbReference>
<dbReference type="MINT" id="Q12675"/>
<dbReference type="STRING" id="4932.YDR093W"/>
<dbReference type="TCDB" id="3.A.3.8.5">
    <property type="family name" value="the p-type atpase (p-atpase) superfamily"/>
</dbReference>
<dbReference type="iPTMnet" id="Q12675"/>
<dbReference type="PaxDb" id="4932-YDR093W"/>
<dbReference type="PeptideAtlas" id="Q12675"/>
<dbReference type="EnsemblFungi" id="YDR093W_mRNA">
    <property type="protein sequence ID" value="YDR093W"/>
    <property type="gene ID" value="YDR093W"/>
</dbReference>
<dbReference type="GeneID" id="851667"/>
<dbReference type="KEGG" id="sce:YDR093W"/>
<dbReference type="AGR" id="SGD:S000002500"/>
<dbReference type="SGD" id="S000002500">
    <property type="gene designation" value="DNF2"/>
</dbReference>
<dbReference type="VEuPathDB" id="FungiDB:YDR093W"/>
<dbReference type="eggNOG" id="KOG0206">
    <property type="taxonomic scope" value="Eukaryota"/>
</dbReference>
<dbReference type="GeneTree" id="ENSGT00940000167741"/>
<dbReference type="HOGENOM" id="CLU_000846_0_1_1"/>
<dbReference type="InParanoid" id="Q12675"/>
<dbReference type="OMA" id="IYADIDM"/>
<dbReference type="OrthoDB" id="377733at2759"/>
<dbReference type="BioCyc" id="YEAST:G3O-29698-MONOMER"/>
<dbReference type="Reactome" id="R-SCE-936837">
    <property type="pathway name" value="Ion transport by P-type ATPases"/>
</dbReference>
<dbReference type="BioGRID-ORCS" id="851667">
    <property type="hits" value="0 hits in 10 CRISPR screens"/>
</dbReference>
<dbReference type="PRO" id="PR:Q12675"/>
<dbReference type="Proteomes" id="UP000002311">
    <property type="component" value="Chromosome IV"/>
</dbReference>
<dbReference type="RNAct" id="Q12675">
    <property type="molecule type" value="protein"/>
</dbReference>
<dbReference type="GO" id="GO:0071944">
    <property type="term" value="C:cell periphery"/>
    <property type="evidence" value="ECO:0007005"/>
    <property type="project" value="SGD"/>
</dbReference>
<dbReference type="GO" id="GO:0005935">
    <property type="term" value="C:cellular bud neck"/>
    <property type="evidence" value="ECO:0007005"/>
    <property type="project" value="SGD"/>
</dbReference>
<dbReference type="GO" id="GO:0005783">
    <property type="term" value="C:endoplasmic reticulum"/>
    <property type="evidence" value="ECO:0007005"/>
    <property type="project" value="SGD"/>
</dbReference>
<dbReference type="GO" id="GO:0070867">
    <property type="term" value="C:mating projection tip membrane"/>
    <property type="evidence" value="ECO:0000314"/>
    <property type="project" value="SGD"/>
</dbReference>
<dbReference type="GO" id="GO:1990531">
    <property type="term" value="C:phospholipid-translocating ATPase complex"/>
    <property type="evidence" value="ECO:0000353"/>
    <property type="project" value="ComplexPortal"/>
</dbReference>
<dbReference type="GO" id="GO:0005886">
    <property type="term" value="C:plasma membrane"/>
    <property type="evidence" value="ECO:0000314"/>
    <property type="project" value="SGD"/>
</dbReference>
<dbReference type="GO" id="GO:0015247">
    <property type="term" value="F:aminophospholipid flippase activity"/>
    <property type="evidence" value="ECO:0000315"/>
    <property type="project" value="SGD"/>
</dbReference>
<dbReference type="GO" id="GO:0005524">
    <property type="term" value="F:ATP binding"/>
    <property type="evidence" value="ECO:0007669"/>
    <property type="project" value="UniProtKB-KW"/>
</dbReference>
<dbReference type="GO" id="GO:0016887">
    <property type="term" value="F:ATP hydrolysis activity"/>
    <property type="evidence" value="ECO:0007669"/>
    <property type="project" value="InterPro"/>
</dbReference>
<dbReference type="GO" id="GO:0140326">
    <property type="term" value="F:ATPase-coupled intramembrane lipid transporter activity"/>
    <property type="evidence" value="ECO:0000318"/>
    <property type="project" value="GO_Central"/>
</dbReference>
<dbReference type="GO" id="GO:0140351">
    <property type="term" value="F:glycosylceramide flippase activity"/>
    <property type="evidence" value="ECO:0000314"/>
    <property type="project" value="UniProtKB"/>
</dbReference>
<dbReference type="GO" id="GO:0000287">
    <property type="term" value="F:magnesium ion binding"/>
    <property type="evidence" value="ECO:0007669"/>
    <property type="project" value="InterPro"/>
</dbReference>
<dbReference type="GO" id="GO:0090554">
    <property type="term" value="F:phosphatidylcholine floppase activity"/>
    <property type="evidence" value="ECO:0007669"/>
    <property type="project" value="RHEA"/>
</dbReference>
<dbReference type="GO" id="GO:0140346">
    <property type="term" value="F:phosphatidylserine flippase activity"/>
    <property type="evidence" value="ECO:0000315"/>
    <property type="project" value="SGD"/>
</dbReference>
<dbReference type="GO" id="GO:0090556">
    <property type="term" value="F:phosphatidylserine floppase activity"/>
    <property type="evidence" value="ECO:0007669"/>
    <property type="project" value="RHEA"/>
</dbReference>
<dbReference type="GO" id="GO:0099040">
    <property type="term" value="P:ceramide translocation"/>
    <property type="evidence" value="ECO:0000315"/>
    <property type="project" value="SGD"/>
</dbReference>
<dbReference type="GO" id="GO:0006897">
    <property type="term" value="P:endocytosis"/>
    <property type="evidence" value="ECO:0000315"/>
    <property type="project" value="SGD"/>
</dbReference>
<dbReference type="GO" id="GO:0007163">
    <property type="term" value="P:establishment or maintenance of cell polarity"/>
    <property type="evidence" value="ECO:0000316"/>
    <property type="project" value="SGD"/>
</dbReference>
<dbReference type="GO" id="GO:0045332">
    <property type="term" value="P:phospholipid translocation"/>
    <property type="evidence" value="ECO:0000314"/>
    <property type="project" value="UniProtKB"/>
</dbReference>
<dbReference type="GO" id="GO:0015031">
    <property type="term" value="P:protein transport"/>
    <property type="evidence" value="ECO:0007669"/>
    <property type="project" value="UniProtKB-KW"/>
</dbReference>
<dbReference type="CDD" id="cd02073">
    <property type="entry name" value="P-type_ATPase_APLT_Dnf-like"/>
    <property type="match status" value="1"/>
</dbReference>
<dbReference type="FunFam" id="3.40.1110.10:FF:000048">
    <property type="entry name" value="Phospholipid-transporting ATPase"/>
    <property type="match status" value="1"/>
</dbReference>
<dbReference type="FunFam" id="3.40.50.1000:FF:000108">
    <property type="entry name" value="Phospholipid-transporting ATPase"/>
    <property type="match status" value="1"/>
</dbReference>
<dbReference type="FunFam" id="3.40.50.1000:FF:000001">
    <property type="entry name" value="Phospholipid-transporting ATPase IC"/>
    <property type="match status" value="1"/>
</dbReference>
<dbReference type="Gene3D" id="3.40.1110.10">
    <property type="entry name" value="Calcium-transporting ATPase, cytoplasmic domain N"/>
    <property type="match status" value="1"/>
</dbReference>
<dbReference type="Gene3D" id="2.70.150.10">
    <property type="entry name" value="Calcium-transporting ATPase, cytoplasmic transduction domain A"/>
    <property type="match status" value="1"/>
</dbReference>
<dbReference type="Gene3D" id="3.40.50.1000">
    <property type="entry name" value="HAD superfamily/HAD-like"/>
    <property type="match status" value="1"/>
</dbReference>
<dbReference type="InterPro" id="IPR023299">
    <property type="entry name" value="ATPase_P-typ_cyto_dom_N"/>
</dbReference>
<dbReference type="InterPro" id="IPR018303">
    <property type="entry name" value="ATPase_P-typ_P_site"/>
</dbReference>
<dbReference type="InterPro" id="IPR023298">
    <property type="entry name" value="ATPase_P-typ_TM_dom_sf"/>
</dbReference>
<dbReference type="InterPro" id="IPR008250">
    <property type="entry name" value="ATPase_P-typ_transduc_dom_A_sf"/>
</dbReference>
<dbReference type="InterPro" id="IPR036412">
    <property type="entry name" value="HAD-like_sf"/>
</dbReference>
<dbReference type="InterPro" id="IPR023214">
    <property type="entry name" value="HAD_sf"/>
</dbReference>
<dbReference type="InterPro" id="IPR006539">
    <property type="entry name" value="P-type_ATPase_IV"/>
</dbReference>
<dbReference type="InterPro" id="IPR032631">
    <property type="entry name" value="P-type_ATPase_N"/>
</dbReference>
<dbReference type="InterPro" id="IPR001757">
    <property type="entry name" value="P_typ_ATPase"/>
</dbReference>
<dbReference type="InterPro" id="IPR032630">
    <property type="entry name" value="P_typ_ATPase_c"/>
</dbReference>
<dbReference type="InterPro" id="IPR044492">
    <property type="entry name" value="P_typ_ATPase_HD_dom"/>
</dbReference>
<dbReference type="NCBIfam" id="TIGR01652">
    <property type="entry name" value="ATPase-Plipid"/>
    <property type="match status" value="1"/>
</dbReference>
<dbReference type="NCBIfam" id="TIGR01494">
    <property type="entry name" value="ATPase_P-type"/>
    <property type="match status" value="2"/>
</dbReference>
<dbReference type="PANTHER" id="PTHR24092:SF180">
    <property type="entry name" value="PHOSPHOLIPID-TRANSPORTING ATPASE DNF1-RELATED"/>
    <property type="match status" value="1"/>
</dbReference>
<dbReference type="PANTHER" id="PTHR24092">
    <property type="entry name" value="PROBABLE PHOSPHOLIPID-TRANSPORTING ATPASE"/>
    <property type="match status" value="1"/>
</dbReference>
<dbReference type="Pfam" id="PF13246">
    <property type="entry name" value="Cation_ATPase"/>
    <property type="match status" value="1"/>
</dbReference>
<dbReference type="Pfam" id="PF16212">
    <property type="entry name" value="PhoLip_ATPase_C"/>
    <property type="match status" value="1"/>
</dbReference>
<dbReference type="Pfam" id="PF16209">
    <property type="entry name" value="PhoLip_ATPase_N"/>
    <property type="match status" value="1"/>
</dbReference>
<dbReference type="SFLD" id="SFLDG00002">
    <property type="entry name" value="C1.7:_P-type_atpase_like"/>
    <property type="match status" value="1"/>
</dbReference>
<dbReference type="SFLD" id="SFLDF00027">
    <property type="entry name" value="p-type_atpase"/>
    <property type="match status" value="1"/>
</dbReference>
<dbReference type="SUPFAM" id="SSF81653">
    <property type="entry name" value="Calcium ATPase, transduction domain A"/>
    <property type="match status" value="1"/>
</dbReference>
<dbReference type="SUPFAM" id="SSF81665">
    <property type="entry name" value="Calcium ATPase, transmembrane domain M"/>
    <property type="match status" value="1"/>
</dbReference>
<dbReference type="SUPFAM" id="SSF56784">
    <property type="entry name" value="HAD-like"/>
    <property type="match status" value="1"/>
</dbReference>
<dbReference type="SUPFAM" id="SSF81660">
    <property type="entry name" value="Metal cation-transporting ATPase, ATP-binding domain N"/>
    <property type="match status" value="1"/>
</dbReference>
<dbReference type="PROSITE" id="PS00154">
    <property type="entry name" value="ATPASE_E1_E2"/>
    <property type="match status" value="1"/>
</dbReference>
<keyword id="KW-0002">3D-structure</keyword>
<keyword id="KW-0067">ATP-binding</keyword>
<keyword id="KW-1003">Cell membrane</keyword>
<keyword id="KW-1017">Isopeptide bond</keyword>
<keyword id="KW-0445">Lipid transport</keyword>
<keyword id="KW-0460">Magnesium</keyword>
<keyword id="KW-0472">Membrane</keyword>
<keyword id="KW-0479">Metal-binding</keyword>
<keyword id="KW-0547">Nucleotide-binding</keyword>
<keyword id="KW-0597">Phosphoprotein</keyword>
<keyword id="KW-0653">Protein transport</keyword>
<keyword id="KW-1185">Reference proteome</keyword>
<keyword id="KW-1278">Translocase</keyword>
<keyword id="KW-0812">Transmembrane</keyword>
<keyword id="KW-1133">Transmembrane helix</keyword>
<keyword id="KW-0813">Transport</keyword>
<keyword id="KW-0832">Ubl conjugation</keyword>
<comment type="function">
    <text evidence="10 11 15 16">Catalytic component of a P4-ATPase flippase complex which catalyzes the hydrolysis of ATP coupled to the transport of glucosylceramide, phosphatidylcholine, phosphatidylethanolamine, and small amounts of phosphatidylserine from the lumenal to the cytosolic leaflet of the cell membrane and ensures the maintenance of asymmetric distribution of phospholipids (PubMed:12631737, PubMed:33060204, PubMed:33320091). Does not appear to transport sphingomyelin, inositol phosphoceramide or phosphatidic acid (PubMed:12631737, PubMed:33320091). Required for efficient endocytosis (PubMed:12631737). Required for protein transport from Golgi to vacuoles (PubMed:12221123).</text>
</comment>
<comment type="catalytic activity">
    <reaction evidence="18 19 20 21">
        <text>ATP + H2O + phospholipidSide 1 = ADP + phosphate + phospholipidSide 2.</text>
        <dbReference type="EC" id="7.6.2.1"/>
    </reaction>
</comment>
<comment type="catalytic activity">
    <reaction evidence="18 19">
        <text>a 1,2-diacyl-sn-glycero-3-phosphoethanolamine(out) + ATP + H2O = a 1,2-diacyl-sn-glycero-3-phosphoethanolamine(in) + ADP + phosphate + H(+)</text>
        <dbReference type="Rhea" id="RHEA:66132"/>
        <dbReference type="ChEBI" id="CHEBI:15377"/>
        <dbReference type="ChEBI" id="CHEBI:15378"/>
        <dbReference type="ChEBI" id="CHEBI:30616"/>
        <dbReference type="ChEBI" id="CHEBI:43474"/>
        <dbReference type="ChEBI" id="CHEBI:64612"/>
        <dbReference type="ChEBI" id="CHEBI:456216"/>
    </reaction>
    <physiologicalReaction direction="left-to-right" evidence="18 19">
        <dbReference type="Rhea" id="RHEA:66133"/>
    </physiologicalReaction>
</comment>
<comment type="catalytic activity">
    <reaction evidence="18 19 20">
        <text>a 1,2-diacyl-sn-glycero-3-phosphocholine(out) + ATP + H2O = a 1,2-diacyl-sn-glycero-3-phosphocholine(in) + ADP + phosphate + H(+)</text>
        <dbReference type="Rhea" id="RHEA:38583"/>
        <dbReference type="ChEBI" id="CHEBI:15377"/>
        <dbReference type="ChEBI" id="CHEBI:15378"/>
        <dbReference type="ChEBI" id="CHEBI:30616"/>
        <dbReference type="ChEBI" id="CHEBI:43474"/>
        <dbReference type="ChEBI" id="CHEBI:57643"/>
        <dbReference type="ChEBI" id="CHEBI:456216"/>
    </reaction>
    <physiologicalReaction direction="left-to-right" evidence="18 19 20">
        <dbReference type="Rhea" id="RHEA:38584"/>
    </physiologicalReaction>
</comment>
<comment type="catalytic activity">
    <reaction evidence="20 21">
        <text>a beta-D-glucosyl-(1&lt;-&gt;1')-N-acylsphing-4-enine(out) + ATP + H2O = a beta-D-glucosyl-(1&lt;-&gt;1')-N-acylsphing-4-enine(in) + ADP + phosphate + H(+)</text>
        <dbReference type="Rhea" id="RHEA:66036"/>
        <dbReference type="ChEBI" id="CHEBI:15377"/>
        <dbReference type="ChEBI" id="CHEBI:15378"/>
        <dbReference type="ChEBI" id="CHEBI:22801"/>
        <dbReference type="ChEBI" id="CHEBI:30616"/>
        <dbReference type="ChEBI" id="CHEBI:43474"/>
        <dbReference type="ChEBI" id="CHEBI:456216"/>
    </reaction>
    <physiologicalReaction direction="left-to-right" evidence="20 21">
        <dbReference type="Rhea" id="RHEA:66037"/>
    </physiologicalReaction>
</comment>
<comment type="catalytic activity">
    <reaction evidence="18 19">
        <text>a 1,2-diacyl-sn-glycero-3-phospho-L-serine(out) + ATP + H2O = a 1,2-diacyl-sn-glycero-3-phospho-L-serine(in) + ADP + phosphate + H(+)</text>
        <dbReference type="Rhea" id="RHEA:38567"/>
        <dbReference type="ChEBI" id="CHEBI:15377"/>
        <dbReference type="ChEBI" id="CHEBI:15378"/>
        <dbReference type="ChEBI" id="CHEBI:30616"/>
        <dbReference type="ChEBI" id="CHEBI:43474"/>
        <dbReference type="ChEBI" id="CHEBI:57262"/>
        <dbReference type="ChEBI" id="CHEBI:456216"/>
    </reaction>
    <physiologicalReaction direction="left-to-right" evidence="18 19">
        <dbReference type="Rhea" id="RHEA:38568"/>
    </physiologicalReaction>
</comment>
<comment type="cofactor">
    <cofactor evidence="16">
        <name>Mg(2+)</name>
        <dbReference type="ChEBI" id="CHEBI:18420"/>
    </cofactor>
</comment>
<comment type="activity regulation">
    <text evidence="15">Phosphatidylcholine flippase activity is inhibited by glucosylsphingosine, lactosylsphingosine, lysophosphatidylcholine and to a lesser degree sphingosine-1-phosphate and lysosphingomyelin (PubMed:33060204). Glucosylceramide flippase activity is inhibited by lysophosphatidylcholine, glucosylsphingosine and to a lesser degree lactosylsphingosine whereas lysosphingomyelin has a stimulatory effect at low concentrations (PubMed:33060204).</text>
</comment>
<comment type="subunit">
    <text evidence="16">Component of a flippase complex consisting of DNF1 and LEM3 (PubMed:33320091). Interacts with LEM3; the interaction is direct (PubMed:33320091).</text>
</comment>
<comment type="interaction">
    <interactant intactId="EBI-3114">
        <id>Q12675</id>
    </interactant>
    <interactant intactId="EBI-3121">
        <id>P32660</id>
        <label>DNF1</label>
    </interactant>
    <organismsDiffer>false</organismsDiffer>
    <experiments>4</experiments>
</comment>
<comment type="interaction">
    <interactant intactId="EBI-3114">
        <id>Q12675</id>
    </interactant>
    <interactant intactId="EBI-28396">
        <id>P42838</id>
        <label>LEM3</label>
    </interactant>
    <organismsDiffer>false</organismsDiffer>
    <experiments>3</experiments>
</comment>
<comment type="subcellular location">
    <subcellularLocation>
        <location evidence="10 11 12 13 15">Cell membrane</location>
        <topology evidence="10 12">Multi-pass membrane protein</topology>
    </subcellularLocation>
</comment>
<comment type="PTM">
    <text evidence="12">Phosphorylated by FPK1 and KIN82.</text>
</comment>
<comment type="disruption phenotype">
    <text evidence="11 14 15">Decreases phosphatidylcholine and glucosylceramide transport into cell (PubMed:33060204). Simultaneous knockout of DNF2 leads to abnormal endocytosis and abnormal cell surface exposure of phosphatidylethanolamine, phosphatidylcholine and phosphatidylserine (PubMed:12631737). Simultaneous knockout of DNF2 results in cold sensitivity, and sensitivity to cobalt, nickel, zinc, calcium, and magnesium ions, duramycin and cinnamycin (phosphatidylethanolamine-binding cytotoxins) and papuamide A (phosphatidylserine-binding cytotoxin) (PubMed:12631737, PubMed:30824614).</text>
</comment>
<comment type="similarity">
    <text evidence="17">Belongs to the cation transport ATPase (P-type) (TC 3.A.3) family. Type IV subfamily.</text>
</comment>
<proteinExistence type="evidence at protein level"/>
<organism>
    <name type="scientific">Saccharomyces cerevisiae (strain ATCC 204508 / S288c)</name>
    <name type="common">Baker's yeast</name>
    <dbReference type="NCBI Taxonomy" id="559292"/>
    <lineage>
        <taxon>Eukaryota</taxon>
        <taxon>Fungi</taxon>
        <taxon>Dikarya</taxon>
        <taxon>Ascomycota</taxon>
        <taxon>Saccharomycotina</taxon>
        <taxon>Saccharomycetes</taxon>
        <taxon>Saccharomycetales</taxon>
        <taxon>Saccharomycetaceae</taxon>
        <taxon>Saccharomyces</taxon>
    </lineage>
</organism>
<protein>
    <recommendedName>
        <fullName evidence="4">Phospholipid-transporting ATPase DNF2</fullName>
        <ecNumber evidence="18 19 20 21">7.6.2.1</ecNumber>
    </recommendedName>
    <alternativeName>
        <fullName>Flippase DNF2</fullName>
    </alternativeName>
</protein>
<sequence length="1612" mass="182619">MSSPSKPTSPFVDDIEHESGSASNGLSSMSPFDDSFQFEKPSSAHGNIEVAKTGGSVLKRQSKPMKDISTPDLSKVTFDGIDDYSNDNDINDDDELNGKKTEIHEHENEVDDDLHSFQATPMPNTGGFEDVELDNNEGSNNDSQADHKLKRVRFGTRRNKSGRIDINRSKTLKWAKKNFHNAIDEFSTKEDSLENSALQNRSDELRTVYYNLPLPEDMLDEDGLPLAVYPRNKIRTTKYTPLTFFPKNILFQFHNFANIYFLILLILGAFQIFGVTNPGFASVPLIVIVIITAIKDGIEDSRRTVLDLEVNNTRTHILSGVKNENVAVDNVSLWRRFKKANTRALIKIFEYFSENLTAAGREKKLQKKREELRRKRNSRSFGPRGSLDSIGSYRMSADFGRPSLDYENLNQTMSQANRYNDGENLVDRTLQPNPECRFAKDYWKNVKVGDIVRVHNNDEIPADMILLSTSDVDGACYVETKNLDGETNLKVRQSLKCSKIIKSSRDITRTKFWVESEGPHANLYSYQGNFKWQDTQNGNIRNEPVNINNLLLRGCTLRNTKWAMGMVIFTGDDTKIMINAGVTPTKKSRISRELNFSVILNFVLLFILCFTAGIVNGVYYKQKPRSRDYFEFGTIGGSASTNGFVSFWVAVILYQSLVPISLYISVEIIKTAQAIFIYTDVLLYNAKLDYPCTPKSWNISDDLGQIEYIFSDKTGTLTQNVMEFKKCTINGVSYGRAYTEALAGLRKRQGVDVESEGRREKEEIAKDRETMIDELRSMSDNTQFCPEDLTFVSKEIVEDLKGSSGDHQQKCCEHFLLALALCHSVLVEPNKDDPKKLDIKAQSPDESALVSTARQLGYSFVGSSKSGLIVEIQGVQKEFQVLNVLEFNSSRKRMSCIIKIPGSTPKDEPKALLICKGADSVIYSRLDRTQNDATLLEKTALHLEEYATEGLRTLCLAQRELTWSEYERWVKTYDVAAASVTNREEELDKVTDVIERELILLGGTAIEDRLQDGVPDSIALLAEAGIKLWVLTGDKVETAINIGFSCNVLNNDMELLVVKASGEDVEEFGSDPIQVVNNLVTKYLREKFGMSGSEEELKEAKREHGLPQGNFAVIIDGDALKVALNGEEMRRKFLLLCKNCKAVLCCRVSPAQKAAVVKLVKKTLDVMTLAIGDGSNDVAMIQSADVGVGIAGEEGRQAVMCSDYAIGQFRYVTRLVLVHGKWCYKRLAEMIPQFFYKNVIFTLSLFWYGIYNNFDGSYLFEYTYLTFYNLAFTSVPVILLAVLDQDVSDTVSMLVPQLYRVGILRKEWNQTKFLWYMLDGVYQSVICFFFPYLAYHKNMVVTENGLGLDHRYFVGVFVTAIAVTSCNFYVFMEQYRWDWFCGLFICLSLAVFYGWTGIWTSSSSSNEFYKGAARVFAQPAYWAVLFVGVLFCLLPRFTIDCIRKIFYPKDIEIVREMWLRGDFDLYPQGYDPTDPSRPRINEIRPLTDFKEPISLDTHFDGVSHSQETIVTEEIPMSILNGEQGSRKGYRVSTTLERRDQLSPVTTTNNLPRRSMASARGNKLRTSLDRTREEMLANHQLDTRYSVERARASLDLPGINHAETLLSQRSRDR</sequence>
<reference key="1">
    <citation type="journal article" date="1997" name="Nature">
        <title>The nucleotide sequence of Saccharomyces cerevisiae chromosome IV.</title>
        <authorList>
            <person name="Jacq C."/>
            <person name="Alt-Moerbe J."/>
            <person name="Andre B."/>
            <person name="Arnold W."/>
            <person name="Bahr A."/>
            <person name="Ballesta J.P.G."/>
            <person name="Bargues M."/>
            <person name="Baron L."/>
            <person name="Becker A."/>
            <person name="Biteau N."/>
            <person name="Bloecker H."/>
            <person name="Blugeon C."/>
            <person name="Boskovic J."/>
            <person name="Brandt P."/>
            <person name="Brueckner M."/>
            <person name="Buitrago M.J."/>
            <person name="Coster F."/>
            <person name="Delaveau T."/>
            <person name="del Rey F."/>
            <person name="Dujon B."/>
            <person name="Eide L.G."/>
            <person name="Garcia-Cantalejo J.M."/>
            <person name="Goffeau A."/>
            <person name="Gomez-Peris A."/>
            <person name="Granotier C."/>
            <person name="Hanemann V."/>
            <person name="Hankeln T."/>
            <person name="Hoheisel J.D."/>
            <person name="Jaeger W."/>
            <person name="Jimenez A."/>
            <person name="Jonniaux J.-L."/>
            <person name="Kraemer C."/>
            <person name="Kuester H."/>
            <person name="Laamanen P."/>
            <person name="Legros Y."/>
            <person name="Louis E.J."/>
            <person name="Moeller-Rieker S."/>
            <person name="Monnet A."/>
            <person name="Moro M."/>
            <person name="Mueller-Auer S."/>
            <person name="Nussbaumer B."/>
            <person name="Paricio N."/>
            <person name="Paulin L."/>
            <person name="Perea J."/>
            <person name="Perez-Alonso M."/>
            <person name="Perez-Ortin J.E."/>
            <person name="Pohl T.M."/>
            <person name="Prydz H."/>
            <person name="Purnelle B."/>
            <person name="Rasmussen S.W."/>
            <person name="Remacha M.A."/>
            <person name="Revuelta J.L."/>
            <person name="Rieger M."/>
            <person name="Salom D."/>
            <person name="Saluz H.P."/>
            <person name="Saiz J.E."/>
            <person name="Saren A.-M."/>
            <person name="Schaefer M."/>
            <person name="Scharfe M."/>
            <person name="Schmidt E.R."/>
            <person name="Schneider C."/>
            <person name="Scholler P."/>
            <person name="Schwarz S."/>
            <person name="Soler-Mira A."/>
            <person name="Urrestarazu L.A."/>
            <person name="Verhasselt P."/>
            <person name="Vissers S."/>
            <person name="Voet M."/>
            <person name="Volckaert G."/>
            <person name="Wagner G."/>
            <person name="Wambutt R."/>
            <person name="Wedler E."/>
            <person name="Wedler H."/>
            <person name="Woelfl S."/>
            <person name="Harris D.E."/>
            <person name="Bowman S."/>
            <person name="Brown D."/>
            <person name="Churcher C.M."/>
            <person name="Connor R."/>
            <person name="Dedman K."/>
            <person name="Gentles S."/>
            <person name="Hamlin N."/>
            <person name="Hunt S."/>
            <person name="Jones L."/>
            <person name="McDonald S."/>
            <person name="Murphy L.D."/>
            <person name="Niblett D."/>
            <person name="Odell C."/>
            <person name="Oliver K."/>
            <person name="Rajandream M.A."/>
            <person name="Richards C."/>
            <person name="Shore L."/>
            <person name="Walsh S.V."/>
            <person name="Barrell B.G."/>
            <person name="Dietrich F.S."/>
            <person name="Mulligan J.T."/>
            <person name="Allen E."/>
            <person name="Araujo R."/>
            <person name="Aviles E."/>
            <person name="Berno A."/>
            <person name="Carpenter J."/>
            <person name="Chen E."/>
            <person name="Cherry J.M."/>
            <person name="Chung E."/>
            <person name="Duncan M."/>
            <person name="Hunicke-Smith S."/>
            <person name="Hyman R.W."/>
            <person name="Komp C."/>
            <person name="Lashkari D."/>
            <person name="Lew H."/>
            <person name="Lin D."/>
            <person name="Mosedale D."/>
            <person name="Nakahara K."/>
            <person name="Namath A."/>
            <person name="Oefner P."/>
            <person name="Oh C."/>
            <person name="Petel F.X."/>
            <person name="Roberts D."/>
            <person name="Schramm S."/>
            <person name="Schroeder M."/>
            <person name="Shogren T."/>
            <person name="Shroff N."/>
            <person name="Winant A."/>
            <person name="Yelton M.A."/>
            <person name="Botstein D."/>
            <person name="Davis R.W."/>
            <person name="Johnston M."/>
            <person name="Andrews S."/>
            <person name="Brinkman R."/>
            <person name="Cooper J."/>
            <person name="Ding H."/>
            <person name="Du Z."/>
            <person name="Favello A."/>
            <person name="Fulton L."/>
            <person name="Gattung S."/>
            <person name="Greco T."/>
            <person name="Hallsworth K."/>
            <person name="Hawkins J."/>
            <person name="Hillier L.W."/>
            <person name="Jier M."/>
            <person name="Johnson D."/>
            <person name="Johnston L."/>
            <person name="Kirsten J."/>
            <person name="Kucaba T."/>
            <person name="Langston Y."/>
            <person name="Latreille P."/>
            <person name="Le T."/>
            <person name="Mardis E."/>
            <person name="Menezes S."/>
            <person name="Miller N."/>
            <person name="Nhan M."/>
            <person name="Pauley A."/>
            <person name="Peluso D."/>
            <person name="Rifkin L."/>
            <person name="Riles L."/>
            <person name="Taich A."/>
            <person name="Trevaskis E."/>
            <person name="Vignati D."/>
            <person name="Wilcox L."/>
            <person name="Wohldman P."/>
            <person name="Vaudin M."/>
            <person name="Wilson R."/>
            <person name="Waterston R."/>
            <person name="Albermann K."/>
            <person name="Hani J."/>
            <person name="Heumann K."/>
            <person name="Kleine K."/>
            <person name="Mewes H.-W."/>
            <person name="Zollner A."/>
            <person name="Zaccaria P."/>
        </authorList>
    </citation>
    <scope>NUCLEOTIDE SEQUENCE [LARGE SCALE GENOMIC DNA]</scope>
    <source>
        <strain>ATCC 204508 / S288c</strain>
    </source>
</reference>
<reference key="2">
    <citation type="journal article" date="2014" name="G3 (Bethesda)">
        <title>The reference genome sequence of Saccharomyces cerevisiae: Then and now.</title>
        <authorList>
            <person name="Engel S.R."/>
            <person name="Dietrich F.S."/>
            <person name="Fisk D.G."/>
            <person name="Binkley G."/>
            <person name="Balakrishnan R."/>
            <person name="Costanzo M.C."/>
            <person name="Dwight S.S."/>
            <person name="Hitz B.C."/>
            <person name="Karra K."/>
            <person name="Nash R.S."/>
            <person name="Weng S."/>
            <person name="Wong E.D."/>
            <person name="Lloyd P."/>
            <person name="Skrzypek M.S."/>
            <person name="Miyasato S.R."/>
            <person name="Simison M."/>
            <person name="Cherry J.M."/>
        </authorList>
    </citation>
    <scope>GENOME REANNOTATION</scope>
    <source>
        <strain>ATCC 204508 / S288c</strain>
    </source>
</reference>
<reference key="3">
    <citation type="journal article" date="2002" name="Mol. Biol. Cell">
        <title>An essential subfamily of Drs2p-related P-type ATPases is required for protein trafficking between Golgi complex and endosomal/vacuolar system.</title>
        <authorList>
            <person name="Hua Z."/>
            <person name="Fatheddin P."/>
            <person name="Graham T.R."/>
        </authorList>
    </citation>
    <scope>FUNCTION</scope>
    <scope>SUBCELLULAR LOCATION</scope>
</reference>
<reference key="4">
    <citation type="journal article" date="2003" name="Mol. Biol. Cell">
        <title>Drs2p-related P-type ATPases Dnf1p and Dnf2p are required for phospholipid translocation across the yeast plasma membrane and serve a role in endocytosis.</title>
        <authorList>
            <person name="Pomorski T."/>
            <person name="Lombardi R."/>
            <person name="Riezman H."/>
            <person name="Devaux P.F."/>
            <person name="van Meer G."/>
            <person name="Holthuis J.C."/>
        </authorList>
    </citation>
    <scope>FUNCTION</scope>
    <scope>CATALYTIC ACTIVITY</scope>
    <scope>SUBCELLULAR LOCATION</scope>
    <scope>DISRUPTION PHENOTYPE</scope>
</reference>
<reference key="5">
    <citation type="journal article" date="2005" name="Mol. Cell. Proteomics">
        <title>Quantitative phosphoproteomics applied to the yeast pheromone signaling pathway.</title>
        <authorList>
            <person name="Gruhler A."/>
            <person name="Olsen J.V."/>
            <person name="Mohammed S."/>
            <person name="Mortensen P."/>
            <person name="Faergeman N.J."/>
            <person name="Mann M."/>
            <person name="Jensen O.N."/>
        </authorList>
    </citation>
    <scope>PHOSPHORYLATION [LARGE SCALE ANALYSIS] AT SER-1542</scope>
    <scope>IDENTIFICATION BY MASS SPECTROMETRY [LARGE SCALE ANALYSIS]</scope>
    <source>
        <strain>YAL6B</strain>
    </source>
</reference>
<reference key="6">
    <citation type="journal article" date="2006" name="Proc. Natl. Acad. Sci. U.S.A.">
        <title>A global topology map of the Saccharomyces cerevisiae membrane proteome.</title>
        <authorList>
            <person name="Kim H."/>
            <person name="Melen K."/>
            <person name="Oesterberg M."/>
            <person name="von Heijne G."/>
        </authorList>
    </citation>
    <scope>TOPOLOGY [LARGE SCALE ANALYSIS]</scope>
    <source>
        <strain>ATCC 208353 / W303-1A</strain>
    </source>
</reference>
<reference key="7">
    <citation type="journal article" date="2007" name="J. Proteome Res.">
        <title>Large-scale phosphorylation analysis of alpha-factor-arrested Saccharomyces cerevisiae.</title>
        <authorList>
            <person name="Li X."/>
            <person name="Gerber S.A."/>
            <person name="Rudner A.D."/>
            <person name="Beausoleil S.A."/>
            <person name="Haas W."/>
            <person name="Villen J."/>
            <person name="Elias J.E."/>
            <person name="Gygi S.P."/>
        </authorList>
    </citation>
    <scope>PHOSPHORYLATION [LARGE SCALE ANALYSIS] AT THR-70; SER-389; SER-392 AND SER-1542</scope>
    <scope>IDENTIFICATION BY MASS SPECTROMETRY [LARGE SCALE ANALYSIS]</scope>
    <source>
        <strain>ADR376</strain>
    </source>
</reference>
<reference key="8">
    <citation type="journal article" date="2008" name="Mol. Biol. Cell">
        <title>Protein kinases Fpk1p and Fpk2p are novel regulators of phospholipid asymmetry.</title>
        <authorList>
            <person name="Nakano K."/>
            <person name="Yamamoto T."/>
            <person name="Kishimoto T."/>
            <person name="Noji T."/>
            <person name="Tanaka K."/>
        </authorList>
    </citation>
    <scope>SUBCELLULAR LOCATION</scope>
    <scope>PHOSPHORYLATION BY FPK1 AND KIN82</scope>
</reference>
<reference key="9">
    <citation type="journal article" date="2008" name="Mol. Cell. Proteomics">
        <title>A multidimensional chromatography technology for in-depth phosphoproteome analysis.</title>
        <authorList>
            <person name="Albuquerque C.P."/>
            <person name="Smolka M.B."/>
            <person name="Payne S.H."/>
            <person name="Bafna V."/>
            <person name="Eng J."/>
            <person name="Zhou H."/>
        </authorList>
    </citation>
    <scope>PHOSPHORYLATION [LARGE SCALE ANALYSIS] AT SER-1542 AND SER-1592</scope>
    <scope>IDENTIFICATION BY MASS SPECTROMETRY [LARGE SCALE ANALYSIS]</scope>
</reference>
<reference key="10">
    <citation type="journal article" date="2009" name="Science">
        <title>Global analysis of Cdk1 substrate phosphorylation sites provides insights into evolution.</title>
        <authorList>
            <person name="Holt L.J."/>
            <person name="Tuch B.B."/>
            <person name="Villen J."/>
            <person name="Johnson A.D."/>
            <person name="Gygi S.P."/>
            <person name="Morgan D.O."/>
        </authorList>
    </citation>
    <scope>PHOSPHORYLATION [LARGE SCALE ANALYSIS] AT SER-85; SER-396; SER-403; TYR-406; THR-782; SER-1542 AND SER-1592</scope>
    <scope>IDENTIFICATION BY MASS SPECTROMETRY [LARGE SCALE ANALYSIS]</scope>
</reference>
<reference key="11">
    <citation type="journal article" date="2012" name="Proteomics">
        <title>Sites of ubiquitin attachment in Saccharomyces cerevisiae.</title>
        <authorList>
            <person name="Starita L.M."/>
            <person name="Lo R.S."/>
            <person name="Eng J.K."/>
            <person name="von Haller P.D."/>
            <person name="Fields S."/>
        </authorList>
    </citation>
    <scope>UBIQUITINATION [LARGE SCALE ANALYSIS] AT LYS-938</scope>
    <scope>IDENTIFICATION BY MASS SPECTROMETRY [LARGE SCALE ANALYSIS]</scope>
</reference>
<reference key="12">
    <citation type="journal article" date="2016" name="J. Biol. Chem.">
        <title>The Essential Neo1 Protein from Budding Yeast Plays a Role in Establishing Aminophospholipid Asymmetry of the Plasma Membrane.</title>
        <authorList>
            <person name="Takar M."/>
            <person name="Wu Y."/>
            <person name="Graham T.R."/>
        </authorList>
    </citation>
    <scope>SUBCELLULAR LOCATION</scope>
</reference>
<reference key="13">
    <citation type="journal article" date="2019" name="J. Lipid Res.">
        <title>The PQ-loop protein Any1 segregates Drs2 and Neo1 functions required for viability and plasma membrane phospholipid asymmetry.</title>
        <authorList>
            <person name="Takar M."/>
            <person name="Huang Y."/>
            <person name="Graham T.R."/>
        </authorList>
    </citation>
    <scope>DISRUPTION PHENOTYPE</scope>
</reference>
<reference key="14">
    <citation type="journal article" date="2020" name="J. Biol. Chem.">
        <title>Exofacial membrane composition and lipid metabolism regulates plasma membrane P4-ATPase substrate specificity.</title>
        <authorList>
            <person name="Jain B.K."/>
            <person name="Roland B.P."/>
            <person name="Graham T.R."/>
        </authorList>
    </citation>
    <scope>FUNCTION</scope>
    <scope>CATALYTIC ACTIVITY</scope>
    <scope>SUBCELLULAR LOCATION</scope>
    <scope>DISRUPTION PHENOTYPE</scope>
    <scope>MUTAGENESIS OF ASN-258; SER-386; SER-396; SER-403; GLN-655; SER-1566 AND SER-1592</scope>
</reference>
<reference evidence="22 23 24 25 26" key="15">
    <citation type="journal article" date="2020" name="Elife">
        <title>Transport mechanism of P4 ATPase phosphatidylcholine flippases.</title>
        <authorList>
            <person name="Bai L."/>
            <person name="You Q."/>
            <person name="Jain B.K."/>
            <person name="Duan H.D."/>
            <person name="Kovach A."/>
            <person name="Graham T.R."/>
            <person name="Li H."/>
        </authorList>
    </citation>
    <scope>STRUCTURE BY ELECTRON MICROSCOPY (3.08 ANGSTROMS) IN COMPLEX WITH LEM3 AND MAGNESIUM</scope>
    <scope>FUNCTION</scope>
    <scope>CATALYTIC ACTIVITY</scope>
    <scope>COFACTOR</scope>
    <scope>IDENTIFICATION IN A COMPLEX WITH LEM3</scope>
    <scope>INTERACTION WITH LEM3</scope>
</reference>
<feature type="chain" id="PRO_0000046234" description="Phospholipid-transporting ATPase DNF2">
    <location>
        <begin position="1"/>
        <end position="1612"/>
    </location>
</feature>
<feature type="topological domain" description="Cytoplasmic" evidence="8">
    <location>
        <begin position="1"/>
        <end position="252"/>
    </location>
</feature>
<feature type="transmembrane region" description="Helical" evidence="8">
    <location>
        <begin position="253"/>
        <end position="273"/>
    </location>
</feature>
<feature type="topological domain" description="Extracellular" evidence="8">
    <location>
        <begin position="274"/>
        <end position="277"/>
    </location>
</feature>
<feature type="transmembrane region" description="Helical" evidence="8">
    <location>
        <begin position="278"/>
        <end position="298"/>
    </location>
</feature>
<feature type="topological domain" description="Cytoplasmic" evidence="8">
    <location>
        <begin position="299"/>
        <end position="598"/>
    </location>
</feature>
<feature type="transmembrane region" description="Helical" evidence="8">
    <location>
        <begin position="599"/>
        <end position="619"/>
    </location>
</feature>
<feature type="topological domain" description="Extracellular" evidence="8">
    <location>
        <begin position="620"/>
        <end position="639"/>
    </location>
</feature>
<feature type="transmembrane region" description="Helical" evidence="8">
    <location>
        <begin position="640"/>
        <end position="660"/>
    </location>
</feature>
<feature type="topological domain" description="Cytoplasmic" evidence="8">
    <location>
        <begin position="661"/>
        <end position="1231"/>
    </location>
</feature>
<feature type="transmembrane region" description="Helical" evidence="8">
    <location>
        <begin position="1232"/>
        <end position="1252"/>
    </location>
</feature>
<feature type="topological domain" description="Extracellular" evidence="8">
    <location>
        <begin position="1253"/>
        <end position="1262"/>
    </location>
</feature>
<feature type="transmembrane region" description="Helical" evidence="8">
    <location>
        <begin position="1263"/>
        <end position="1283"/>
    </location>
</feature>
<feature type="topological domain" description="Cytoplasmic" evidence="8">
    <location>
        <begin position="1284"/>
        <end position="1313"/>
    </location>
</feature>
<feature type="transmembrane region" description="Helical" evidence="8">
    <location>
        <begin position="1314"/>
        <end position="1334"/>
    </location>
</feature>
<feature type="topological domain" description="Extracellular" evidence="8">
    <location>
        <begin position="1335"/>
        <end position="1350"/>
    </location>
</feature>
<feature type="transmembrane region" description="Helical" evidence="8">
    <location>
        <begin position="1351"/>
        <end position="1371"/>
    </location>
</feature>
<feature type="topological domain" description="Cytoplasmic" evidence="8">
    <location>
        <begin position="1372"/>
        <end position="1377"/>
    </location>
</feature>
<feature type="transmembrane region" description="Helical" evidence="8">
    <location>
        <begin position="1378"/>
        <end position="1398"/>
    </location>
</feature>
<feature type="topological domain" description="Extracellular" evidence="8">
    <location>
        <begin position="1399"/>
        <end position="1418"/>
    </location>
</feature>
<feature type="transmembrane region" description="Helical" evidence="8">
    <location>
        <begin position="1419"/>
        <end position="1439"/>
    </location>
</feature>
<feature type="topological domain" description="Cytoplasmic" evidence="8">
    <location>
        <begin position="1440"/>
        <end position="1612"/>
    </location>
</feature>
<feature type="region of interest" description="Disordered" evidence="9">
    <location>
        <begin position="1"/>
        <end position="74"/>
    </location>
</feature>
<feature type="region of interest" description="Involved in phosphatidylcholine substrate selection" evidence="4">
    <location>
        <begin position="272"/>
        <end position="279"/>
    </location>
</feature>
<feature type="region of interest" description="Disordered" evidence="9">
    <location>
        <begin position="364"/>
        <end position="384"/>
    </location>
</feature>
<feature type="region of interest" description="Involved in phosphatidylcholine substrate selection" evidence="4">
    <location>
        <begin position="631"/>
        <end position="635"/>
    </location>
</feature>
<feature type="region of interest" description="Disordered" evidence="9">
    <location>
        <begin position="1544"/>
        <end position="1563"/>
    </location>
</feature>
<feature type="compositionally biased region" description="Low complexity" evidence="9">
    <location>
        <begin position="20"/>
        <end position="30"/>
    </location>
</feature>
<feature type="compositionally biased region" description="Basic and acidic residues" evidence="9">
    <location>
        <begin position="364"/>
        <end position="373"/>
    </location>
</feature>
<feature type="active site" description="4-aspartylphosphate intermediate" evidence="17">
    <location>
        <position position="712"/>
    </location>
</feature>
<feature type="binding site" evidence="7">
    <location>
        <position position="712"/>
    </location>
    <ligand>
        <name>ATP</name>
        <dbReference type="ChEBI" id="CHEBI:30616"/>
    </ligand>
</feature>
<feature type="binding site" evidence="7">
    <location>
        <position position="712"/>
    </location>
    <ligand>
        <name>Mg(2+)</name>
        <dbReference type="ChEBI" id="CHEBI:18420"/>
    </ligand>
</feature>
<feature type="binding site" evidence="7">
    <location>
        <position position="713"/>
    </location>
    <ligand>
        <name>ATP</name>
        <dbReference type="ChEBI" id="CHEBI:30616"/>
    </ligand>
</feature>
<feature type="binding site" evidence="16 25">
    <location>
        <position position="714"/>
    </location>
    <ligand>
        <name>ATP</name>
        <dbReference type="ChEBI" id="CHEBI:30616"/>
    </ligand>
</feature>
<feature type="binding site" evidence="7">
    <location>
        <position position="714"/>
    </location>
    <ligand>
        <name>Mg(2+)</name>
        <dbReference type="ChEBI" id="CHEBI:18420"/>
    </ligand>
</feature>
<feature type="binding site" evidence="16 25">
    <location>
        <position position="846"/>
    </location>
    <ligand>
        <name>ATP</name>
        <dbReference type="ChEBI" id="CHEBI:30616"/>
    </ligand>
</feature>
<feature type="binding site" evidence="7">
    <location>
        <position position="887"/>
    </location>
    <ligand>
        <name>ATP</name>
        <dbReference type="ChEBI" id="CHEBI:30616"/>
    </ligand>
</feature>
<feature type="binding site" evidence="4">
    <location>
        <position position="889"/>
    </location>
    <ligand>
        <name>ATP</name>
        <dbReference type="ChEBI" id="CHEBI:30616"/>
    </ligand>
</feature>
<feature type="binding site" evidence="5">
    <location>
        <position position="892"/>
    </location>
    <ligand>
        <name>ATP</name>
        <dbReference type="ChEBI" id="CHEBI:30616"/>
    </ligand>
</feature>
<feature type="binding site" evidence="3">
    <location>
        <position position="916"/>
    </location>
    <ligand>
        <name>ATP</name>
        <dbReference type="ChEBI" id="CHEBI:30616"/>
    </ligand>
</feature>
<feature type="binding site" evidence="16 24">
    <location>
        <position position="952"/>
    </location>
    <ligand>
        <name>ATP</name>
        <dbReference type="ChEBI" id="CHEBI:30616"/>
    </ligand>
</feature>
<feature type="binding site" evidence="5">
    <location>
        <position position="953"/>
    </location>
    <ligand>
        <name>ATP</name>
        <dbReference type="ChEBI" id="CHEBI:30616"/>
    </ligand>
</feature>
<feature type="binding site" evidence="16 25">
    <location>
        <position position="1032"/>
    </location>
    <ligand>
        <name>ATP</name>
        <dbReference type="ChEBI" id="CHEBI:30616"/>
    </ligand>
</feature>
<feature type="binding site" evidence="16 24 25">
    <location>
        <position position="1033"/>
    </location>
    <ligand>
        <name>ATP</name>
        <dbReference type="ChEBI" id="CHEBI:30616"/>
    </ligand>
</feature>
<feature type="binding site" evidence="3">
    <location>
        <position position="1034"/>
    </location>
    <ligand>
        <name>ATP</name>
        <dbReference type="ChEBI" id="CHEBI:30616"/>
    </ligand>
</feature>
<feature type="binding site" evidence="16 24">
    <location>
        <position position="1147"/>
    </location>
    <ligand>
        <name>ATP</name>
        <dbReference type="ChEBI" id="CHEBI:30616"/>
    </ligand>
</feature>
<feature type="binding site" evidence="3">
    <location>
        <position position="1153"/>
    </location>
    <ligand>
        <name>ATP</name>
        <dbReference type="ChEBI" id="CHEBI:30616"/>
    </ligand>
</feature>
<feature type="binding site" evidence="7">
    <location>
        <position position="1173"/>
    </location>
    <ligand>
        <name>Mg(2+)</name>
        <dbReference type="ChEBI" id="CHEBI:18420"/>
    </ligand>
</feature>
<feature type="binding site" evidence="7">
    <location>
        <position position="1176"/>
    </location>
    <ligand>
        <name>ATP</name>
        <dbReference type="ChEBI" id="CHEBI:30616"/>
    </ligand>
</feature>
<feature type="binding site" evidence="3">
    <location>
        <position position="1177"/>
    </location>
    <ligand>
        <name>ATP</name>
        <dbReference type="ChEBI" id="CHEBI:30616"/>
    </ligand>
</feature>
<feature type="binding site" evidence="6">
    <location>
        <position position="1177"/>
    </location>
    <ligand>
        <name>Mg(2+)</name>
        <dbReference type="ChEBI" id="CHEBI:18420"/>
    </ligand>
</feature>
<feature type="binding site" evidence="2">
    <location>
        <position position="1436"/>
    </location>
    <ligand>
        <name>a 1,2-diacyl-sn-glycero-3-phospho-L-serine</name>
        <dbReference type="ChEBI" id="CHEBI:57262"/>
    </ligand>
</feature>
<feature type="site" description="Involved in the release of the transported lipid into the cytosolic leaflet" evidence="1">
    <location>
        <position position="660"/>
    </location>
</feature>
<feature type="modified residue" description="Phosphothreonine" evidence="28">
    <location>
        <position position="70"/>
    </location>
</feature>
<feature type="modified residue" description="Phosphoserine" evidence="30">
    <location>
        <position position="85"/>
    </location>
</feature>
<feature type="modified residue" description="Phosphoserine" evidence="28">
    <location>
        <position position="389"/>
    </location>
</feature>
<feature type="modified residue" description="Phosphoserine" evidence="28">
    <location>
        <position position="392"/>
    </location>
</feature>
<feature type="modified residue" description="Phosphoserine" evidence="30">
    <location>
        <position position="396"/>
    </location>
</feature>
<feature type="modified residue" description="Phosphoserine" evidence="30">
    <location>
        <position position="403"/>
    </location>
</feature>
<feature type="modified residue" description="Phosphotyrosine" evidence="30">
    <location>
        <position position="406"/>
    </location>
</feature>
<feature type="modified residue" description="Phosphothreonine" evidence="30">
    <location>
        <position position="782"/>
    </location>
</feature>
<feature type="modified residue" description="Phosphoserine" evidence="27 28 29 30">
    <location>
        <position position="1542"/>
    </location>
</feature>
<feature type="modified residue" description="Phosphoserine" evidence="29 30">
    <location>
        <position position="1592"/>
    </location>
</feature>
<feature type="cross-link" description="Glycyl lysine isopeptide (Lys-Gly) (interchain with G-Cter in ubiquitin)" evidence="31">
    <location>
        <position position="938"/>
    </location>
</feature>
<feature type="mutagenesis site" description="Decreases glucosylceramide and phosphatidylcholine import into cells." evidence="15">
    <original>N</original>
    <variation>S</variation>
    <location>
        <position position="258"/>
    </location>
</feature>
<feature type="mutagenesis site" description="Loss of activity; when associated with A-396; A-403; A-1566 and A-1592." evidence="15">
    <original>S</original>
    <variation>A</variation>
    <location>
        <position position="386"/>
    </location>
</feature>
<feature type="mutagenesis site" description="No apparent gain of activity; when associated with D-396; D-403; D-1566 and D-1592." evidence="15">
    <original>S</original>
    <variation>D</variation>
    <location>
        <position position="386"/>
    </location>
</feature>
<feature type="mutagenesis site" description="Loss of activity; when associated with A-386; A-403; A-1566 and A-1592." evidence="15">
    <original>S</original>
    <variation>A</variation>
    <location>
        <position position="396"/>
    </location>
</feature>
<feature type="mutagenesis site" description="No apparent gain of activity; when associated with D-386; D-403; D-1566 and D-1592." evidence="15">
    <original>S</original>
    <variation>D</variation>
    <location>
        <position position="396"/>
    </location>
</feature>
<feature type="mutagenesis site" description="Loss of activity; when associated with A-386; A-396; A-1566 and A-1592." evidence="15">
    <original>S</original>
    <variation>A</variation>
    <location>
        <position position="403"/>
    </location>
</feature>
<feature type="mutagenesis site" description="No apparent gain of activity; when associated with D-386; D-396; D-1566 and D-1592." evidence="15">
    <original>S</original>
    <variation>D</variation>
    <location>
        <position position="403"/>
    </location>
</feature>
<feature type="mutagenesis site" description="Decreases phosphatidylcholine import into cells, but does not apparently affect glucosylceramide transport." evidence="15">
    <original>Q</original>
    <variation>N</variation>
    <location>
        <position position="655"/>
    </location>
</feature>
<feature type="mutagenesis site" description="Loss of activity; when associated with A-386; A-396; A-403 and A-1592." evidence="15">
    <original>S</original>
    <variation>A</variation>
    <location>
        <position position="1566"/>
    </location>
</feature>
<feature type="mutagenesis site" description="No apparent gain of activity; when associated with D-386; D-396; D-403 and D-1592." evidence="15">
    <original>S</original>
    <variation>D</variation>
    <location>
        <position position="1566"/>
    </location>
</feature>
<feature type="mutagenesis site" description="Loss of activity; when associated with A-386; A-396; A-403 and A-1566." evidence="15">
    <original>S</original>
    <variation>A</variation>
    <location>
        <position position="1592"/>
    </location>
</feature>
<feature type="mutagenesis site" description="No apparent gain of activity; when associated with D-386; D-396; D-403 and D-1566." evidence="15">
    <original>S</original>
    <variation>D</variation>
    <location>
        <position position="1592"/>
    </location>
</feature>
<feature type="strand" evidence="33">
    <location>
        <begin position="206"/>
        <end position="212"/>
    </location>
</feature>
<feature type="turn" evidence="33">
    <location>
        <begin position="216"/>
        <end position="218"/>
    </location>
</feature>
<feature type="strand" evidence="33">
    <location>
        <begin position="221"/>
        <end position="226"/>
    </location>
</feature>
<feature type="helix" evidence="33">
    <location>
        <begin position="244"/>
        <end position="252"/>
    </location>
</feature>
<feature type="helix" evidence="33">
    <location>
        <begin position="256"/>
        <end position="269"/>
    </location>
</feature>
<feature type="strand" evidence="33">
    <location>
        <begin position="273"/>
        <end position="276"/>
    </location>
</feature>
<feature type="helix" evidence="33">
    <location>
        <begin position="278"/>
        <end position="280"/>
    </location>
</feature>
<feature type="helix" evidence="32">
    <location>
        <begin position="283"/>
        <end position="298"/>
    </location>
</feature>
<feature type="strand" evidence="33">
    <location>
        <begin position="315"/>
        <end position="321"/>
    </location>
</feature>
<feature type="strand" evidence="33">
    <location>
        <begin position="437"/>
        <end position="441"/>
    </location>
</feature>
<feature type="strand" evidence="33">
    <location>
        <begin position="451"/>
        <end position="454"/>
    </location>
</feature>
<feature type="strand" evidence="33">
    <location>
        <begin position="464"/>
        <end position="471"/>
    </location>
</feature>
<feature type="strand" evidence="33">
    <location>
        <begin position="475"/>
        <end position="479"/>
    </location>
</feature>
<feature type="turn" evidence="33">
    <location>
        <begin position="481"/>
        <end position="483"/>
    </location>
</feature>
<feature type="strand" evidence="33">
    <location>
        <begin position="490"/>
        <end position="493"/>
    </location>
</feature>
<feature type="helix" evidence="33">
    <location>
        <begin position="497"/>
        <end position="499"/>
    </location>
</feature>
<feature type="helix" evidence="33">
    <location>
        <begin position="504"/>
        <end position="507"/>
    </location>
</feature>
<feature type="strand" evidence="33">
    <location>
        <begin position="512"/>
        <end position="516"/>
    </location>
</feature>
<feature type="strand" evidence="33">
    <location>
        <begin position="528"/>
        <end position="533"/>
    </location>
</feature>
<feature type="strand" evidence="33">
    <location>
        <begin position="535"/>
        <end position="538"/>
    </location>
</feature>
<feature type="strand" evidence="33">
    <location>
        <begin position="540"/>
        <end position="545"/>
    </location>
</feature>
<feature type="helix" evidence="33">
    <location>
        <begin position="547"/>
        <end position="549"/>
    </location>
</feature>
<feature type="strand" evidence="33">
    <location>
        <begin position="563"/>
        <end position="567"/>
    </location>
</feature>
<feature type="helix" evidence="33">
    <location>
        <begin position="571"/>
        <end position="573"/>
    </location>
</feature>
<feature type="turn" evidence="33">
    <location>
        <begin position="575"/>
        <end position="577"/>
    </location>
</feature>
<feature type="strand" evidence="33">
    <location>
        <begin position="578"/>
        <end position="580"/>
    </location>
</feature>
<feature type="helix" evidence="32">
    <location>
        <begin position="589"/>
        <end position="620"/>
    </location>
</feature>
<feature type="helix" evidence="32">
    <location>
        <begin position="627"/>
        <end position="630"/>
    </location>
</feature>
<feature type="helix" evidence="32">
    <location>
        <begin position="641"/>
        <end position="653"/>
    </location>
</feature>
<feature type="turn" evidence="33">
    <location>
        <begin position="654"/>
        <end position="656"/>
    </location>
</feature>
<feature type="helix" evidence="32">
    <location>
        <begin position="660"/>
        <end position="678"/>
    </location>
</feature>
<feature type="strand" evidence="32">
    <location>
        <begin position="681"/>
        <end position="683"/>
    </location>
</feature>
<feature type="turn" evidence="32">
    <location>
        <begin position="686"/>
        <end position="689"/>
    </location>
</feature>
<feature type="strand" evidence="33">
    <location>
        <begin position="693"/>
        <end position="695"/>
    </location>
</feature>
<feature type="helix" evidence="32">
    <location>
        <begin position="703"/>
        <end position="705"/>
    </location>
</feature>
<feature type="strand" evidence="32">
    <location>
        <begin position="708"/>
        <end position="712"/>
    </location>
</feature>
<feature type="turn" evidence="32">
    <location>
        <begin position="713"/>
        <end position="716"/>
    </location>
</feature>
<feature type="strand" evidence="32">
    <location>
        <begin position="717"/>
        <end position="729"/>
    </location>
</feature>
<feature type="strand" evidence="32">
    <location>
        <begin position="732"/>
        <end position="735"/>
    </location>
</feature>
<feature type="helix" evidence="32">
    <location>
        <begin position="740"/>
        <end position="749"/>
    </location>
</feature>
<feature type="turn" evidence="32">
    <location>
        <begin position="753"/>
        <end position="756"/>
    </location>
</feature>
<feature type="helix" evidence="32">
    <location>
        <begin position="757"/>
        <end position="778"/>
    </location>
</feature>
<feature type="helix" evidence="32">
    <location>
        <begin position="786"/>
        <end position="788"/>
    </location>
</feature>
<feature type="helix" evidence="32">
    <location>
        <begin position="795"/>
        <end position="802"/>
    </location>
</feature>
<feature type="helix" evidence="32">
    <location>
        <begin position="807"/>
        <end position="821"/>
    </location>
</feature>
<feature type="strand" evidence="33">
    <location>
        <begin position="826"/>
        <end position="829"/>
    </location>
</feature>
<feature type="strand" evidence="32">
    <location>
        <begin position="834"/>
        <end position="836"/>
    </location>
</feature>
<feature type="strand" evidence="33">
    <location>
        <begin position="837"/>
        <end position="840"/>
    </location>
</feature>
<feature type="helix" evidence="32">
    <location>
        <begin position="844"/>
        <end position="855"/>
    </location>
</feature>
<feature type="strand" evidence="33">
    <location>
        <begin position="858"/>
        <end position="861"/>
    </location>
</feature>
<feature type="strand" evidence="32">
    <location>
        <begin position="865"/>
        <end position="867"/>
    </location>
</feature>
<feature type="strand" evidence="32">
    <location>
        <begin position="870"/>
        <end position="872"/>
    </location>
</feature>
<feature type="strand" evidence="32">
    <location>
        <begin position="875"/>
        <end position="877"/>
    </location>
</feature>
<feature type="strand" evidence="33">
    <location>
        <begin position="881"/>
        <end position="885"/>
    </location>
</feature>
<feature type="turn" evidence="32">
    <location>
        <begin position="889"/>
        <end position="891"/>
    </location>
</feature>
<feature type="strand" evidence="33">
    <location>
        <begin position="893"/>
        <end position="900"/>
    </location>
</feature>
<feature type="strand" evidence="33">
    <location>
        <begin position="910"/>
        <end position="917"/>
    </location>
</feature>
<feature type="turn" evidence="32">
    <location>
        <begin position="919"/>
        <end position="921"/>
    </location>
</feature>
<feature type="strand" evidence="32">
    <location>
        <begin position="922"/>
        <end position="924"/>
    </location>
</feature>
<feature type="strand" evidence="33">
    <location>
        <begin position="928"/>
        <end position="931"/>
    </location>
</feature>
<feature type="helix" evidence="32">
    <location>
        <begin position="934"/>
        <end position="949"/>
    </location>
</feature>
<feature type="strand" evidence="32">
    <location>
        <begin position="952"/>
        <end position="957"/>
    </location>
</feature>
<feature type="helix" evidence="32">
    <location>
        <begin position="966"/>
        <end position="976"/>
    </location>
</feature>
<feature type="turn" evidence="32">
    <location>
        <begin position="981"/>
        <end position="983"/>
    </location>
</feature>
<feature type="helix" evidence="32">
    <location>
        <begin position="985"/>
        <end position="993"/>
    </location>
</feature>
<feature type="strand" evidence="32">
    <location>
        <begin position="995"/>
        <end position="997"/>
    </location>
</feature>
<feature type="strand" evidence="32">
    <location>
        <begin position="1000"/>
        <end position="1010"/>
    </location>
</feature>
<feature type="helix" evidence="32">
    <location>
        <begin position="1014"/>
        <end position="1023"/>
    </location>
</feature>
<feature type="strand" evidence="32">
    <location>
        <begin position="1027"/>
        <end position="1031"/>
    </location>
</feature>
<feature type="helix" evidence="32">
    <location>
        <begin position="1037"/>
        <end position="1045"/>
    </location>
</feature>
<feature type="turn" evidence="32">
    <location>
        <begin position="1046"/>
        <end position="1048"/>
    </location>
</feature>
<feature type="strand" evidence="32">
    <location>
        <begin position="1055"/>
        <end position="1057"/>
    </location>
</feature>
<feature type="strand" evidence="33">
    <location>
        <begin position="1060"/>
        <end position="1063"/>
    </location>
</feature>
<feature type="helix" evidence="32">
    <location>
        <begin position="1072"/>
        <end position="1086"/>
    </location>
</feature>
<feature type="helix" evidence="32">
    <location>
        <begin position="1095"/>
        <end position="1101"/>
    </location>
</feature>
<feature type="strand" evidence="32">
    <location>
        <begin position="1112"/>
        <end position="1115"/>
    </location>
</feature>
<feature type="helix" evidence="32">
    <location>
        <begin position="1117"/>
        <end position="1121"/>
    </location>
</feature>
<feature type="strand" evidence="32">
    <location>
        <begin position="1124"/>
        <end position="1126"/>
    </location>
</feature>
<feature type="helix" evidence="32">
    <location>
        <begin position="1127"/>
        <end position="1136"/>
    </location>
</feature>
<feature type="strand" evidence="32">
    <location>
        <begin position="1140"/>
        <end position="1145"/>
    </location>
</feature>
<feature type="helix" evidence="32">
    <location>
        <begin position="1150"/>
        <end position="1161"/>
    </location>
</feature>
<feature type="turn" evidence="32">
    <location>
        <begin position="1162"/>
        <end position="1165"/>
    </location>
</feature>
<feature type="strand" evidence="33">
    <location>
        <begin position="1167"/>
        <end position="1169"/>
    </location>
</feature>
<feature type="helix" evidence="32">
    <location>
        <begin position="1175"/>
        <end position="1181"/>
    </location>
</feature>
<feature type="strand" evidence="32">
    <location>
        <begin position="1184"/>
        <end position="1186"/>
    </location>
</feature>
<feature type="strand" evidence="32">
    <location>
        <begin position="1188"/>
        <end position="1190"/>
    </location>
</feature>
<feature type="strand" evidence="33">
    <location>
        <begin position="1192"/>
        <end position="1194"/>
    </location>
</feature>
<feature type="helix" evidence="32">
    <location>
        <begin position="1197"/>
        <end position="1200"/>
    </location>
</feature>
<feature type="strand" evidence="32">
    <location>
        <begin position="1202"/>
        <end position="1209"/>
    </location>
</feature>
<feature type="helix" evidence="32">
    <location>
        <begin position="1211"/>
        <end position="1216"/>
    </location>
</feature>
<feature type="helix" evidence="32">
    <location>
        <begin position="1219"/>
        <end position="1247"/>
    </location>
</feature>
<feature type="turn" evidence="32">
    <location>
        <begin position="1248"/>
        <end position="1250"/>
    </location>
</feature>
<feature type="helix" evidence="32">
    <location>
        <begin position="1251"/>
        <end position="1254"/>
    </location>
</feature>
<feature type="helix" evidence="32">
    <location>
        <begin position="1264"/>
        <end position="1270"/>
    </location>
</feature>
<feature type="helix" evidence="32">
    <location>
        <begin position="1275"/>
        <end position="1283"/>
    </location>
</feature>
<feature type="helix" evidence="32">
    <location>
        <begin position="1289"/>
        <end position="1294"/>
    </location>
</feature>
<feature type="helix" evidence="32">
    <location>
        <begin position="1296"/>
        <end position="1299"/>
    </location>
</feature>
<feature type="helix" evidence="32">
    <location>
        <begin position="1300"/>
        <end position="1303"/>
    </location>
</feature>
<feature type="helix" evidence="32">
    <location>
        <begin position="1310"/>
        <end position="1336"/>
    </location>
</feature>
<feature type="strand" evidence="32">
    <location>
        <begin position="1342"/>
        <end position="1346"/>
    </location>
</feature>
<feature type="helix" evidence="32">
    <location>
        <begin position="1351"/>
        <end position="1372"/>
    </location>
</feature>
<feature type="strand" evidence="32">
    <location>
        <begin position="1375"/>
        <end position="1378"/>
    </location>
</feature>
<feature type="helix" evidence="32">
    <location>
        <begin position="1381"/>
        <end position="1400"/>
    </location>
</feature>
<feature type="helix" evidence="32">
    <location>
        <begin position="1403"/>
        <end position="1405"/>
    </location>
</feature>
<feature type="helix" evidence="32">
    <location>
        <begin position="1411"/>
        <end position="1415"/>
    </location>
</feature>
<feature type="helix" evidence="32">
    <location>
        <begin position="1419"/>
        <end position="1446"/>
    </location>
</feature>
<feature type="helix" evidence="32">
    <location>
        <begin position="1450"/>
        <end position="1460"/>
    </location>
</feature>
<feature type="helix" evidence="32">
    <location>
        <begin position="1462"/>
        <end position="1464"/>
    </location>
</feature>
<accession>Q12675</accession>
<accession>D6VS80</accession>
<evidence type="ECO:0000250" key="1">
    <source>
        <dbReference type="UniProtKB" id="C7EXK4"/>
    </source>
</evidence>
<evidence type="ECO:0000250" key="2">
    <source>
        <dbReference type="UniProtKB" id="G0S196"/>
    </source>
</evidence>
<evidence type="ECO:0000250" key="3">
    <source>
        <dbReference type="UniProtKB" id="P04191"/>
    </source>
</evidence>
<evidence type="ECO:0000250" key="4">
    <source>
        <dbReference type="UniProtKB" id="P32660"/>
    </source>
</evidence>
<evidence type="ECO:0000250" key="5">
    <source>
        <dbReference type="UniProtKB" id="P39524"/>
    </source>
</evidence>
<evidence type="ECO:0000250" key="6">
    <source>
        <dbReference type="UniProtKB" id="Q8NB49"/>
    </source>
</evidence>
<evidence type="ECO:0000250" key="7">
    <source>
        <dbReference type="UniProtKB" id="Q9Y2Q0"/>
    </source>
</evidence>
<evidence type="ECO:0000255" key="8"/>
<evidence type="ECO:0000256" key="9">
    <source>
        <dbReference type="SAM" id="MobiDB-lite"/>
    </source>
</evidence>
<evidence type="ECO:0000269" key="10">
    <source>
    </source>
</evidence>
<evidence type="ECO:0000269" key="11">
    <source>
    </source>
</evidence>
<evidence type="ECO:0000269" key="12">
    <source>
    </source>
</evidence>
<evidence type="ECO:0000269" key="13">
    <source>
    </source>
</evidence>
<evidence type="ECO:0000269" key="14">
    <source>
    </source>
</evidence>
<evidence type="ECO:0000269" key="15">
    <source>
    </source>
</evidence>
<evidence type="ECO:0000269" key="16">
    <source>
    </source>
</evidence>
<evidence type="ECO:0000305" key="17"/>
<evidence type="ECO:0000305" key="18">
    <source>
    </source>
</evidence>
<evidence type="ECO:0000305" key="19">
    <source>
    </source>
</evidence>
<evidence type="ECO:0000305" key="20">
    <source>
    </source>
</evidence>
<evidence type="ECO:0000305" key="21">
    <source>
    </source>
</evidence>
<evidence type="ECO:0007744" key="22">
    <source>
        <dbReference type="PDB" id="7KY5"/>
    </source>
</evidence>
<evidence type="ECO:0007744" key="23">
    <source>
        <dbReference type="PDB" id="7KY7"/>
    </source>
</evidence>
<evidence type="ECO:0007744" key="24">
    <source>
        <dbReference type="PDB" id="7KY8"/>
    </source>
</evidence>
<evidence type="ECO:0007744" key="25">
    <source>
        <dbReference type="PDB" id="7KY9"/>
    </source>
</evidence>
<evidence type="ECO:0007744" key="26">
    <source>
        <dbReference type="PDB" id="7KYA"/>
    </source>
</evidence>
<evidence type="ECO:0007744" key="27">
    <source>
    </source>
</evidence>
<evidence type="ECO:0007744" key="28">
    <source>
    </source>
</evidence>
<evidence type="ECO:0007744" key="29">
    <source>
    </source>
</evidence>
<evidence type="ECO:0007744" key="30">
    <source>
    </source>
</evidence>
<evidence type="ECO:0007744" key="31">
    <source>
    </source>
</evidence>
<evidence type="ECO:0007829" key="32">
    <source>
        <dbReference type="PDB" id="7KY7"/>
    </source>
</evidence>
<evidence type="ECO:0007829" key="33">
    <source>
        <dbReference type="PDB" id="7KYA"/>
    </source>
</evidence>